<accession>B0RXI3</accession>
<reference key="1">
    <citation type="journal article" date="2008" name="J. Biotechnol.">
        <title>The genome of Xanthomonas campestris pv. campestris B100 and its use for the reconstruction of metabolic pathways involved in xanthan biosynthesis.</title>
        <authorList>
            <person name="Vorhoelter F.-J."/>
            <person name="Schneiker S."/>
            <person name="Goesmann A."/>
            <person name="Krause L."/>
            <person name="Bekel T."/>
            <person name="Kaiser O."/>
            <person name="Linke B."/>
            <person name="Patschkowski T."/>
            <person name="Rueckert C."/>
            <person name="Schmid J."/>
            <person name="Sidhu V.K."/>
            <person name="Sieber V."/>
            <person name="Tauch A."/>
            <person name="Watt S.A."/>
            <person name="Weisshaar B."/>
            <person name="Becker A."/>
            <person name="Niehaus K."/>
            <person name="Puehler A."/>
        </authorList>
    </citation>
    <scope>NUCLEOTIDE SEQUENCE [LARGE SCALE GENOMIC DNA]</scope>
    <source>
        <strain>B100</strain>
    </source>
</reference>
<feature type="chain" id="PRO_1000120678" description="Small ribosomal subunit protein bS21">
    <location>
        <begin position="1"/>
        <end position="71"/>
    </location>
</feature>
<feature type="region of interest" description="Disordered" evidence="2">
    <location>
        <begin position="39"/>
        <end position="71"/>
    </location>
</feature>
<feature type="compositionally biased region" description="Basic residues" evidence="2">
    <location>
        <begin position="45"/>
        <end position="59"/>
    </location>
</feature>
<feature type="compositionally biased region" description="Basic and acidic residues" evidence="2">
    <location>
        <begin position="60"/>
        <end position="71"/>
    </location>
</feature>
<proteinExistence type="inferred from homology"/>
<keyword id="KW-0687">Ribonucleoprotein</keyword>
<keyword id="KW-0689">Ribosomal protein</keyword>
<evidence type="ECO:0000255" key="1">
    <source>
        <dbReference type="HAMAP-Rule" id="MF_00358"/>
    </source>
</evidence>
<evidence type="ECO:0000256" key="2">
    <source>
        <dbReference type="SAM" id="MobiDB-lite"/>
    </source>
</evidence>
<evidence type="ECO:0000305" key="3"/>
<comment type="similarity">
    <text evidence="1">Belongs to the bacterial ribosomal protein bS21 family.</text>
</comment>
<name>RS21_XANCB</name>
<sequence>MPSVKVRENEPFEFALRRFKRTCEKAGVLAETRKREFYEKPTQERKRKAAAAVKRQLRRSSRDVTKRQRLY</sequence>
<organism>
    <name type="scientific">Xanthomonas campestris pv. campestris (strain B100)</name>
    <dbReference type="NCBI Taxonomy" id="509169"/>
    <lineage>
        <taxon>Bacteria</taxon>
        <taxon>Pseudomonadati</taxon>
        <taxon>Pseudomonadota</taxon>
        <taxon>Gammaproteobacteria</taxon>
        <taxon>Lysobacterales</taxon>
        <taxon>Lysobacteraceae</taxon>
        <taxon>Xanthomonas</taxon>
    </lineage>
</organism>
<gene>
    <name evidence="1" type="primary">rpsU</name>
    <name type="ordered locus">xcc-b100_4002</name>
</gene>
<dbReference type="EMBL" id="AM920689">
    <property type="protein sequence ID" value="CAP53369.1"/>
    <property type="molecule type" value="Genomic_DNA"/>
</dbReference>
<dbReference type="SMR" id="B0RXI3"/>
<dbReference type="KEGG" id="xca:xcc-b100_4002"/>
<dbReference type="HOGENOM" id="CLU_159258_1_0_6"/>
<dbReference type="Proteomes" id="UP000001188">
    <property type="component" value="Chromosome"/>
</dbReference>
<dbReference type="GO" id="GO:1990904">
    <property type="term" value="C:ribonucleoprotein complex"/>
    <property type="evidence" value="ECO:0007669"/>
    <property type="project" value="UniProtKB-KW"/>
</dbReference>
<dbReference type="GO" id="GO:0005840">
    <property type="term" value="C:ribosome"/>
    <property type="evidence" value="ECO:0007669"/>
    <property type="project" value="UniProtKB-KW"/>
</dbReference>
<dbReference type="GO" id="GO:0003735">
    <property type="term" value="F:structural constituent of ribosome"/>
    <property type="evidence" value="ECO:0007669"/>
    <property type="project" value="InterPro"/>
</dbReference>
<dbReference type="GO" id="GO:0006412">
    <property type="term" value="P:translation"/>
    <property type="evidence" value="ECO:0007669"/>
    <property type="project" value="UniProtKB-UniRule"/>
</dbReference>
<dbReference type="Gene3D" id="1.20.5.1150">
    <property type="entry name" value="Ribosomal protein S8"/>
    <property type="match status" value="1"/>
</dbReference>
<dbReference type="HAMAP" id="MF_00358">
    <property type="entry name" value="Ribosomal_bS21"/>
    <property type="match status" value="1"/>
</dbReference>
<dbReference type="InterPro" id="IPR001911">
    <property type="entry name" value="Ribosomal_bS21"/>
</dbReference>
<dbReference type="InterPro" id="IPR018278">
    <property type="entry name" value="Ribosomal_bS21_CS"/>
</dbReference>
<dbReference type="InterPro" id="IPR038380">
    <property type="entry name" value="Ribosomal_bS21_sf"/>
</dbReference>
<dbReference type="NCBIfam" id="TIGR00030">
    <property type="entry name" value="S21p"/>
    <property type="match status" value="1"/>
</dbReference>
<dbReference type="PANTHER" id="PTHR21109">
    <property type="entry name" value="MITOCHONDRIAL 28S RIBOSOMAL PROTEIN S21"/>
    <property type="match status" value="1"/>
</dbReference>
<dbReference type="PANTHER" id="PTHR21109:SF22">
    <property type="entry name" value="SMALL RIBOSOMAL SUBUNIT PROTEIN BS21"/>
    <property type="match status" value="1"/>
</dbReference>
<dbReference type="Pfam" id="PF01165">
    <property type="entry name" value="Ribosomal_S21"/>
    <property type="match status" value="1"/>
</dbReference>
<dbReference type="PRINTS" id="PR00976">
    <property type="entry name" value="RIBOSOMALS21"/>
</dbReference>
<dbReference type="PROSITE" id="PS01181">
    <property type="entry name" value="RIBOSOMAL_S21"/>
    <property type="match status" value="1"/>
</dbReference>
<protein>
    <recommendedName>
        <fullName evidence="1">Small ribosomal subunit protein bS21</fullName>
    </recommendedName>
    <alternativeName>
        <fullName evidence="3">30S ribosomal protein S21</fullName>
    </alternativeName>
</protein>